<feature type="chain" id="PRO_0000232283" description="ATP-dependent RNA helicase DBP8">
    <location>
        <begin position="1"/>
        <end position="440"/>
    </location>
</feature>
<feature type="domain" description="Helicase ATP-binding" evidence="2">
    <location>
        <begin position="32"/>
        <end position="208"/>
    </location>
</feature>
<feature type="domain" description="Helicase C-terminal" evidence="3">
    <location>
        <begin position="247"/>
        <end position="387"/>
    </location>
</feature>
<feature type="region of interest" description="Disordered" evidence="4">
    <location>
        <begin position="405"/>
        <end position="440"/>
    </location>
</feature>
<feature type="short sequence motif" description="Q motif">
    <location>
        <begin position="1"/>
        <end position="29"/>
    </location>
</feature>
<feature type="short sequence motif" description="DEAD box">
    <location>
        <begin position="154"/>
        <end position="157"/>
    </location>
</feature>
<feature type="compositionally biased region" description="Basic and acidic residues" evidence="4">
    <location>
        <begin position="405"/>
        <end position="415"/>
    </location>
</feature>
<feature type="compositionally biased region" description="Basic and acidic residues" evidence="4">
    <location>
        <begin position="424"/>
        <end position="433"/>
    </location>
</feature>
<feature type="binding site" evidence="2">
    <location>
        <begin position="45"/>
        <end position="52"/>
    </location>
    <ligand>
        <name>ATP</name>
        <dbReference type="ChEBI" id="CHEBI:30616"/>
    </ligand>
</feature>
<comment type="function">
    <text evidence="1">ATP-binding RNA helicase involved in 40S ribosomal subunit biogenesis and is required for the normal formation of 18S rRNAs through pre-rRNA processing at A0, A1 and A2 sites. Required for vegetative growth (By similarity).</text>
</comment>
<comment type="catalytic activity">
    <reaction>
        <text>ATP + H2O = ADP + phosphate + H(+)</text>
        <dbReference type="Rhea" id="RHEA:13065"/>
        <dbReference type="ChEBI" id="CHEBI:15377"/>
        <dbReference type="ChEBI" id="CHEBI:15378"/>
        <dbReference type="ChEBI" id="CHEBI:30616"/>
        <dbReference type="ChEBI" id="CHEBI:43474"/>
        <dbReference type="ChEBI" id="CHEBI:456216"/>
        <dbReference type="EC" id="3.6.4.13"/>
    </reaction>
</comment>
<comment type="subcellular location">
    <subcellularLocation>
        <location evidence="1">Nucleus</location>
        <location evidence="1">Nucleolus</location>
    </subcellularLocation>
</comment>
<comment type="domain">
    <text>The Q motif is unique to and characteristic of the DEAD box family of RNA helicases and controls ATP binding and hydrolysis.</text>
</comment>
<comment type="similarity">
    <text evidence="5">Belongs to the DEAD box helicase family. DDX49/DBP8 subfamily.</text>
</comment>
<dbReference type="EC" id="3.6.4.13"/>
<dbReference type="EMBL" id="CP017630">
    <property type="protein sequence ID" value="AOW31279.1"/>
    <property type="molecule type" value="Genomic_DNA"/>
</dbReference>
<dbReference type="RefSeq" id="XP_711718.1">
    <property type="nucleotide sequence ID" value="XM_706626.1"/>
</dbReference>
<dbReference type="SMR" id="Q59PR3"/>
<dbReference type="BioGRID" id="1229284">
    <property type="interactions" value="1"/>
</dbReference>
<dbReference type="FunCoup" id="Q59PR3">
    <property type="interactions" value="908"/>
</dbReference>
<dbReference type="STRING" id="237561.Q59PR3"/>
<dbReference type="EnsemblFungi" id="CR_05630W_A-T">
    <property type="protein sequence ID" value="CR_05630W_A-T-p1"/>
    <property type="gene ID" value="CR_05630W_A"/>
</dbReference>
<dbReference type="GeneID" id="3646692"/>
<dbReference type="KEGG" id="cal:CAALFM_CR05630WA"/>
<dbReference type="CGD" id="CAL0000181153">
    <property type="gene designation" value="DBP8"/>
</dbReference>
<dbReference type="VEuPathDB" id="FungiDB:CR_05630W_A"/>
<dbReference type="eggNOG" id="KOG0340">
    <property type="taxonomic scope" value="Eukaryota"/>
</dbReference>
<dbReference type="HOGENOM" id="CLU_003041_1_1_1"/>
<dbReference type="InParanoid" id="Q59PR3"/>
<dbReference type="OrthoDB" id="10261904at2759"/>
<dbReference type="PRO" id="PR:Q59PR3"/>
<dbReference type="Proteomes" id="UP000000559">
    <property type="component" value="Chromosome R"/>
</dbReference>
<dbReference type="GO" id="GO:0005730">
    <property type="term" value="C:nucleolus"/>
    <property type="evidence" value="ECO:0007669"/>
    <property type="project" value="UniProtKB-SubCell"/>
</dbReference>
<dbReference type="GO" id="GO:0005634">
    <property type="term" value="C:nucleus"/>
    <property type="evidence" value="ECO:0000318"/>
    <property type="project" value="GO_Central"/>
</dbReference>
<dbReference type="GO" id="GO:0032040">
    <property type="term" value="C:small-subunit processome"/>
    <property type="evidence" value="ECO:0007669"/>
    <property type="project" value="EnsemblFungi"/>
</dbReference>
<dbReference type="GO" id="GO:0005524">
    <property type="term" value="F:ATP binding"/>
    <property type="evidence" value="ECO:0007669"/>
    <property type="project" value="UniProtKB-KW"/>
</dbReference>
<dbReference type="GO" id="GO:0016887">
    <property type="term" value="F:ATP hydrolysis activity"/>
    <property type="evidence" value="ECO:0007669"/>
    <property type="project" value="EnsemblFungi"/>
</dbReference>
<dbReference type="GO" id="GO:0003723">
    <property type="term" value="F:RNA binding"/>
    <property type="evidence" value="ECO:0007669"/>
    <property type="project" value="UniProtKB-KW"/>
</dbReference>
<dbReference type="GO" id="GO:0003724">
    <property type="term" value="F:RNA helicase activity"/>
    <property type="evidence" value="ECO:0007669"/>
    <property type="project" value="UniProtKB-EC"/>
</dbReference>
<dbReference type="GO" id="GO:0000480">
    <property type="term" value="P:endonucleolytic cleavage in 5'-ETS of tricistronic rRNA transcript (SSU-rRNA, 5.8S rRNA, LSU-rRNA)"/>
    <property type="evidence" value="ECO:0007669"/>
    <property type="project" value="EnsemblFungi"/>
</dbReference>
<dbReference type="GO" id="GO:0000447">
    <property type="term" value="P:endonucleolytic cleavage in ITS1 to separate SSU-rRNA from 5.8S rRNA and LSU-rRNA from tricistronic rRNA transcript (SSU-rRNA, 5.8S rRNA, LSU-rRNA)"/>
    <property type="evidence" value="ECO:0007669"/>
    <property type="project" value="EnsemblFungi"/>
</dbReference>
<dbReference type="GO" id="GO:0000472">
    <property type="term" value="P:endonucleolytic cleavage to generate mature 5'-end of SSU-rRNA from (SSU-rRNA, 5.8S rRNA, LSU-rRNA)"/>
    <property type="evidence" value="ECO:0007669"/>
    <property type="project" value="EnsemblFungi"/>
</dbReference>
<dbReference type="GO" id="GO:0006364">
    <property type="term" value="P:rRNA processing"/>
    <property type="evidence" value="ECO:0000318"/>
    <property type="project" value="GO_Central"/>
</dbReference>
<dbReference type="CDD" id="cd17955">
    <property type="entry name" value="DEADc_DDX49"/>
    <property type="match status" value="1"/>
</dbReference>
<dbReference type="CDD" id="cd18787">
    <property type="entry name" value="SF2_C_DEAD"/>
    <property type="match status" value="1"/>
</dbReference>
<dbReference type="Gene3D" id="3.40.50.300">
    <property type="entry name" value="P-loop containing nucleotide triphosphate hydrolases"/>
    <property type="match status" value="2"/>
</dbReference>
<dbReference type="InterPro" id="IPR011545">
    <property type="entry name" value="DEAD/DEAH_box_helicase_dom"/>
</dbReference>
<dbReference type="InterPro" id="IPR050079">
    <property type="entry name" value="DEAD_box_RNA_helicase"/>
</dbReference>
<dbReference type="InterPro" id="IPR014001">
    <property type="entry name" value="Helicase_ATP-bd"/>
</dbReference>
<dbReference type="InterPro" id="IPR001650">
    <property type="entry name" value="Helicase_C-like"/>
</dbReference>
<dbReference type="InterPro" id="IPR027417">
    <property type="entry name" value="P-loop_NTPase"/>
</dbReference>
<dbReference type="InterPro" id="IPR000629">
    <property type="entry name" value="RNA-helicase_DEAD-box_CS"/>
</dbReference>
<dbReference type="InterPro" id="IPR014014">
    <property type="entry name" value="RNA_helicase_DEAD_Q_motif"/>
</dbReference>
<dbReference type="PANTHER" id="PTHR47959:SF24">
    <property type="entry name" value="ATP-DEPENDENT RNA HELICASE"/>
    <property type="match status" value="1"/>
</dbReference>
<dbReference type="PANTHER" id="PTHR47959">
    <property type="entry name" value="ATP-DEPENDENT RNA HELICASE RHLE-RELATED"/>
    <property type="match status" value="1"/>
</dbReference>
<dbReference type="Pfam" id="PF00270">
    <property type="entry name" value="DEAD"/>
    <property type="match status" value="1"/>
</dbReference>
<dbReference type="Pfam" id="PF00271">
    <property type="entry name" value="Helicase_C"/>
    <property type="match status" value="1"/>
</dbReference>
<dbReference type="SMART" id="SM00487">
    <property type="entry name" value="DEXDc"/>
    <property type="match status" value="1"/>
</dbReference>
<dbReference type="SMART" id="SM00490">
    <property type="entry name" value="HELICc"/>
    <property type="match status" value="1"/>
</dbReference>
<dbReference type="SUPFAM" id="SSF52540">
    <property type="entry name" value="P-loop containing nucleoside triphosphate hydrolases"/>
    <property type="match status" value="1"/>
</dbReference>
<dbReference type="PROSITE" id="PS00039">
    <property type="entry name" value="DEAD_ATP_HELICASE"/>
    <property type="match status" value="1"/>
</dbReference>
<dbReference type="PROSITE" id="PS51192">
    <property type="entry name" value="HELICASE_ATP_BIND_1"/>
    <property type="match status" value="1"/>
</dbReference>
<dbReference type="PROSITE" id="PS51194">
    <property type="entry name" value="HELICASE_CTER"/>
    <property type="match status" value="1"/>
</dbReference>
<dbReference type="PROSITE" id="PS51195">
    <property type="entry name" value="Q_MOTIF"/>
    <property type="match status" value="1"/>
</dbReference>
<sequence>MSFNDLGVAKWLSESLDAMKIYTPTAIQSACIPAILKGHDCIGGAKTGSGKTIAFAAPMLTQWSEDPFGIFGLILTPTRELALQIAEQFAALGANMNIKVAVVVGGEDFVQQTLALQRKPHFVIATPGRLADHILNSGEETISGLRRVKYLVLDEADRLLSNSFGSDLQRCFDVLPTSDKRQTLLFTATITDAVRALKEKPPTPGKPPVFMHEVETVDKVAIPSTLQISYVFVPSYVKEAYLNSILHLEQFKDSTAVIFVNRTTTAEVLRRMLRKLDFRVASLHSEMPQSERTNSLHRFKAGAARILIATDVASRGLDIPTVELVINFDIPADPDDFIHRVGRTARAGRKGDAVSIIGEKDIDRIQSIEERINKKMELLEDVNDDNVIKESLSATSVAKRESLMEMDKENFGERKKINRKKHGLDKVKPERVTKPKKSKK</sequence>
<reference key="1">
    <citation type="journal article" date="2004" name="Proc. Natl. Acad. Sci. U.S.A.">
        <title>The diploid genome sequence of Candida albicans.</title>
        <authorList>
            <person name="Jones T."/>
            <person name="Federspiel N.A."/>
            <person name="Chibana H."/>
            <person name="Dungan J."/>
            <person name="Kalman S."/>
            <person name="Magee B.B."/>
            <person name="Newport G."/>
            <person name="Thorstenson Y.R."/>
            <person name="Agabian N."/>
            <person name="Magee P.T."/>
            <person name="Davis R.W."/>
            <person name="Scherer S."/>
        </authorList>
    </citation>
    <scope>NUCLEOTIDE SEQUENCE [LARGE SCALE GENOMIC DNA]</scope>
    <source>
        <strain>SC5314 / ATCC MYA-2876</strain>
    </source>
</reference>
<reference key="2">
    <citation type="journal article" date="2007" name="Genome Biol.">
        <title>Assembly of the Candida albicans genome into sixteen supercontigs aligned on the eight chromosomes.</title>
        <authorList>
            <person name="van het Hoog M."/>
            <person name="Rast T.J."/>
            <person name="Martchenko M."/>
            <person name="Grindle S."/>
            <person name="Dignard D."/>
            <person name="Hogues H."/>
            <person name="Cuomo C."/>
            <person name="Berriman M."/>
            <person name="Scherer S."/>
            <person name="Magee B.B."/>
            <person name="Whiteway M."/>
            <person name="Chibana H."/>
            <person name="Nantel A."/>
            <person name="Magee P.T."/>
        </authorList>
    </citation>
    <scope>GENOME REANNOTATION</scope>
    <source>
        <strain>SC5314 / ATCC MYA-2876</strain>
    </source>
</reference>
<reference key="3">
    <citation type="journal article" date="2013" name="Genome Biol.">
        <title>Assembly of a phased diploid Candida albicans genome facilitates allele-specific measurements and provides a simple model for repeat and indel structure.</title>
        <authorList>
            <person name="Muzzey D."/>
            <person name="Schwartz K."/>
            <person name="Weissman J.S."/>
            <person name="Sherlock G."/>
        </authorList>
    </citation>
    <scope>NUCLEOTIDE SEQUENCE [LARGE SCALE GENOMIC DNA]</scope>
    <scope>GENOME REANNOTATION</scope>
    <source>
        <strain>SC5314 / ATCC MYA-2876</strain>
    </source>
</reference>
<protein>
    <recommendedName>
        <fullName>ATP-dependent RNA helicase DBP8</fullName>
        <ecNumber>3.6.4.13</ecNumber>
    </recommendedName>
</protein>
<name>DBP8_CANAL</name>
<keyword id="KW-0067">ATP-binding</keyword>
<keyword id="KW-0347">Helicase</keyword>
<keyword id="KW-0378">Hydrolase</keyword>
<keyword id="KW-0547">Nucleotide-binding</keyword>
<keyword id="KW-0539">Nucleus</keyword>
<keyword id="KW-1185">Reference proteome</keyword>
<keyword id="KW-0690">Ribosome biogenesis</keyword>
<keyword id="KW-0694">RNA-binding</keyword>
<keyword id="KW-0698">rRNA processing</keyword>
<proteinExistence type="inferred from homology"/>
<organism>
    <name type="scientific">Candida albicans (strain SC5314 / ATCC MYA-2876)</name>
    <name type="common">Yeast</name>
    <dbReference type="NCBI Taxonomy" id="237561"/>
    <lineage>
        <taxon>Eukaryota</taxon>
        <taxon>Fungi</taxon>
        <taxon>Dikarya</taxon>
        <taxon>Ascomycota</taxon>
        <taxon>Saccharomycotina</taxon>
        <taxon>Pichiomycetes</taxon>
        <taxon>Debaryomycetaceae</taxon>
        <taxon>Candida/Lodderomyces clade</taxon>
        <taxon>Candida</taxon>
    </lineage>
</organism>
<gene>
    <name type="primary">DBP8</name>
    <name type="ordered locus">CAALFM_CR05630WA</name>
    <name type="ORF">CaO19.13973</name>
    <name type="ORF">CaO19.6652</name>
</gene>
<evidence type="ECO:0000250" key="1"/>
<evidence type="ECO:0000255" key="2">
    <source>
        <dbReference type="PROSITE-ProRule" id="PRU00541"/>
    </source>
</evidence>
<evidence type="ECO:0000255" key="3">
    <source>
        <dbReference type="PROSITE-ProRule" id="PRU00542"/>
    </source>
</evidence>
<evidence type="ECO:0000256" key="4">
    <source>
        <dbReference type="SAM" id="MobiDB-lite"/>
    </source>
</evidence>
<evidence type="ECO:0000305" key="5"/>
<accession>Q59PR3</accession>
<accession>A0A1D8PT34</accession>